<accession>Q31IY3</accession>
<sequence length="103" mass="11787">MATQNIRIRLKAFDHRLIDQSAREITETAKRTGAQVKGPIPMPTRKERFTVLVSPHVNKDARDQYEIRTHKRLLDIVDPTDKTVDALMKLDLAAGVDVQLELR</sequence>
<name>RS10_HYDCU</name>
<evidence type="ECO:0000255" key="1">
    <source>
        <dbReference type="HAMAP-Rule" id="MF_00508"/>
    </source>
</evidence>
<evidence type="ECO:0000305" key="2"/>
<keyword id="KW-0687">Ribonucleoprotein</keyword>
<keyword id="KW-0689">Ribosomal protein</keyword>
<protein>
    <recommendedName>
        <fullName evidence="1">Small ribosomal subunit protein uS10</fullName>
    </recommendedName>
    <alternativeName>
        <fullName evidence="2">30S ribosomal protein S10</fullName>
    </alternativeName>
</protein>
<reference key="1">
    <citation type="journal article" date="2006" name="PLoS Biol.">
        <title>The genome of deep-sea vent chemolithoautotroph Thiomicrospira crunogena XCL-2.</title>
        <authorList>
            <person name="Scott K.M."/>
            <person name="Sievert S.M."/>
            <person name="Abril F.N."/>
            <person name="Ball L.A."/>
            <person name="Barrett C.J."/>
            <person name="Blake R.A."/>
            <person name="Boller A.J."/>
            <person name="Chain P.S.G."/>
            <person name="Clark J.A."/>
            <person name="Davis C.R."/>
            <person name="Detter C."/>
            <person name="Do K.F."/>
            <person name="Dobrinski K.P."/>
            <person name="Faza B.I."/>
            <person name="Fitzpatrick K.A."/>
            <person name="Freyermuth S.K."/>
            <person name="Harmer T.L."/>
            <person name="Hauser L.J."/>
            <person name="Huegler M."/>
            <person name="Kerfeld C.A."/>
            <person name="Klotz M.G."/>
            <person name="Kong W.W."/>
            <person name="Land M."/>
            <person name="Lapidus A."/>
            <person name="Larimer F.W."/>
            <person name="Longo D.L."/>
            <person name="Lucas S."/>
            <person name="Malfatti S.A."/>
            <person name="Massey S.E."/>
            <person name="Martin D.D."/>
            <person name="McCuddin Z."/>
            <person name="Meyer F."/>
            <person name="Moore J.L."/>
            <person name="Ocampo L.H. Jr."/>
            <person name="Paul J.H."/>
            <person name="Paulsen I.T."/>
            <person name="Reep D.K."/>
            <person name="Ren Q."/>
            <person name="Ross R.L."/>
            <person name="Sato P.Y."/>
            <person name="Thomas P."/>
            <person name="Tinkham L.E."/>
            <person name="Zeruth G.T."/>
        </authorList>
    </citation>
    <scope>NUCLEOTIDE SEQUENCE [LARGE SCALE GENOMIC DNA]</scope>
    <source>
        <strain>DSM 25203 / XCL-2</strain>
    </source>
</reference>
<comment type="function">
    <text evidence="1">Involved in the binding of tRNA to the ribosomes.</text>
</comment>
<comment type="subunit">
    <text evidence="1">Part of the 30S ribosomal subunit.</text>
</comment>
<comment type="similarity">
    <text evidence="1">Belongs to the universal ribosomal protein uS10 family.</text>
</comment>
<gene>
    <name evidence="1" type="primary">rpsJ</name>
    <name type="ordered locus">Tcr_0294</name>
</gene>
<organism>
    <name type="scientific">Hydrogenovibrio crunogenus (strain DSM 25203 / XCL-2)</name>
    <name type="common">Thiomicrospira crunogena</name>
    <dbReference type="NCBI Taxonomy" id="317025"/>
    <lineage>
        <taxon>Bacteria</taxon>
        <taxon>Pseudomonadati</taxon>
        <taxon>Pseudomonadota</taxon>
        <taxon>Gammaproteobacteria</taxon>
        <taxon>Thiotrichales</taxon>
        <taxon>Piscirickettsiaceae</taxon>
        <taxon>Hydrogenovibrio</taxon>
    </lineage>
</organism>
<dbReference type="EMBL" id="CP000109">
    <property type="protein sequence ID" value="ABB40890.1"/>
    <property type="molecule type" value="Genomic_DNA"/>
</dbReference>
<dbReference type="SMR" id="Q31IY3"/>
<dbReference type="STRING" id="317025.Tcr_0294"/>
<dbReference type="KEGG" id="tcx:Tcr_0294"/>
<dbReference type="eggNOG" id="COG0051">
    <property type="taxonomic scope" value="Bacteria"/>
</dbReference>
<dbReference type="HOGENOM" id="CLU_122625_1_3_6"/>
<dbReference type="OrthoDB" id="9804464at2"/>
<dbReference type="GO" id="GO:1990904">
    <property type="term" value="C:ribonucleoprotein complex"/>
    <property type="evidence" value="ECO:0007669"/>
    <property type="project" value="UniProtKB-KW"/>
</dbReference>
<dbReference type="GO" id="GO:0005840">
    <property type="term" value="C:ribosome"/>
    <property type="evidence" value="ECO:0007669"/>
    <property type="project" value="UniProtKB-KW"/>
</dbReference>
<dbReference type="GO" id="GO:0003735">
    <property type="term" value="F:structural constituent of ribosome"/>
    <property type="evidence" value="ECO:0007669"/>
    <property type="project" value="InterPro"/>
</dbReference>
<dbReference type="GO" id="GO:0000049">
    <property type="term" value="F:tRNA binding"/>
    <property type="evidence" value="ECO:0007669"/>
    <property type="project" value="UniProtKB-UniRule"/>
</dbReference>
<dbReference type="GO" id="GO:0006412">
    <property type="term" value="P:translation"/>
    <property type="evidence" value="ECO:0007669"/>
    <property type="project" value="UniProtKB-UniRule"/>
</dbReference>
<dbReference type="FunFam" id="3.30.70.600:FF:000001">
    <property type="entry name" value="30S ribosomal protein S10"/>
    <property type="match status" value="1"/>
</dbReference>
<dbReference type="Gene3D" id="3.30.70.600">
    <property type="entry name" value="Ribosomal protein S10 domain"/>
    <property type="match status" value="1"/>
</dbReference>
<dbReference type="HAMAP" id="MF_00508">
    <property type="entry name" value="Ribosomal_uS10"/>
    <property type="match status" value="1"/>
</dbReference>
<dbReference type="InterPro" id="IPR001848">
    <property type="entry name" value="Ribosomal_uS10"/>
</dbReference>
<dbReference type="InterPro" id="IPR018268">
    <property type="entry name" value="Ribosomal_uS10_CS"/>
</dbReference>
<dbReference type="InterPro" id="IPR027486">
    <property type="entry name" value="Ribosomal_uS10_dom"/>
</dbReference>
<dbReference type="InterPro" id="IPR036838">
    <property type="entry name" value="Ribosomal_uS10_dom_sf"/>
</dbReference>
<dbReference type="NCBIfam" id="NF001861">
    <property type="entry name" value="PRK00596.1"/>
    <property type="match status" value="1"/>
</dbReference>
<dbReference type="NCBIfam" id="TIGR01049">
    <property type="entry name" value="rpsJ_bact"/>
    <property type="match status" value="1"/>
</dbReference>
<dbReference type="PANTHER" id="PTHR11700">
    <property type="entry name" value="30S RIBOSOMAL PROTEIN S10 FAMILY MEMBER"/>
    <property type="match status" value="1"/>
</dbReference>
<dbReference type="Pfam" id="PF00338">
    <property type="entry name" value="Ribosomal_S10"/>
    <property type="match status" value="1"/>
</dbReference>
<dbReference type="PRINTS" id="PR00971">
    <property type="entry name" value="RIBOSOMALS10"/>
</dbReference>
<dbReference type="SMART" id="SM01403">
    <property type="entry name" value="Ribosomal_S10"/>
    <property type="match status" value="1"/>
</dbReference>
<dbReference type="SUPFAM" id="SSF54999">
    <property type="entry name" value="Ribosomal protein S10"/>
    <property type="match status" value="1"/>
</dbReference>
<dbReference type="PROSITE" id="PS00361">
    <property type="entry name" value="RIBOSOMAL_S10"/>
    <property type="match status" value="1"/>
</dbReference>
<feature type="chain" id="PRO_0000237114" description="Small ribosomal subunit protein uS10">
    <location>
        <begin position="1"/>
        <end position="103"/>
    </location>
</feature>
<proteinExistence type="inferred from homology"/>